<sequence length="431" mass="48420">MIERYTLPEMGKIWTDTYKLQTWLDVEIAVCEAQAELGYIPQAAVDEIKAKAKFDPQRVLEIEAEVRHDVIAFLTNVNEYVGDAGRYIHLGLTSSDVLDTALALQLVASLDLILEQLEKLIQAIRYQAQQHRYTVMVGRSHGIHAEPITFGFKLAGWLAEVLRNRDRLVRVAQSIAVGKISGAVGTYANIDPKVEAIACQKLGLEPDTASTQVISRDRHAEYVQQLALLAASLERFAVEIRNLQRTDVLEVEEYFSKGQKGSSAMPHKRNPIRSERLTGMARLVRGHAVAALENVALWHERDISHSSVERVAFPDCCILTHFMLKETTDLVKNLLVYPENMKRNMNVYGGVIFSQKVLLALVEKGMNREDAYRVVQGSAHQAWNTEGGNFEELVRADAQVTALLSAEEIDQCFDPQQHLTNLAEIYSRLDI</sequence>
<name>PUR8_SYNY3</name>
<organism>
    <name type="scientific">Synechocystis sp. (strain ATCC 27184 / PCC 6803 / Kazusa)</name>
    <dbReference type="NCBI Taxonomy" id="1111708"/>
    <lineage>
        <taxon>Bacteria</taxon>
        <taxon>Bacillati</taxon>
        <taxon>Cyanobacteriota</taxon>
        <taxon>Cyanophyceae</taxon>
        <taxon>Synechococcales</taxon>
        <taxon>Merismopediaceae</taxon>
        <taxon>Synechocystis</taxon>
    </lineage>
</organism>
<dbReference type="EC" id="4.3.2.2" evidence="2"/>
<dbReference type="EMBL" id="BA000022">
    <property type="protein sequence ID" value="BAA18481.1"/>
    <property type="molecule type" value="Genomic_DNA"/>
</dbReference>
<dbReference type="PIR" id="S76222">
    <property type="entry name" value="S76222"/>
</dbReference>
<dbReference type="SMR" id="P74384"/>
<dbReference type="FunCoup" id="P74384">
    <property type="interactions" value="469"/>
</dbReference>
<dbReference type="IntAct" id="P74384">
    <property type="interactions" value="1"/>
</dbReference>
<dbReference type="STRING" id="1148.gene:10499362"/>
<dbReference type="PaxDb" id="1148-1653568"/>
<dbReference type="EnsemblBacteria" id="BAA18481">
    <property type="protein sequence ID" value="BAA18481"/>
    <property type="gene ID" value="BAA18481"/>
</dbReference>
<dbReference type="KEGG" id="syn:sll0421"/>
<dbReference type="eggNOG" id="COG0015">
    <property type="taxonomic scope" value="Bacteria"/>
</dbReference>
<dbReference type="InParanoid" id="P74384"/>
<dbReference type="PhylomeDB" id="P74384"/>
<dbReference type="UniPathway" id="UPA00074">
    <property type="reaction ID" value="UER00132"/>
</dbReference>
<dbReference type="UniPathway" id="UPA00075">
    <property type="reaction ID" value="UER00336"/>
</dbReference>
<dbReference type="Proteomes" id="UP000001425">
    <property type="component" value="Chromosome"/>
</dbReference>
<dbReference type="GO" id="GO:0070626">
    <property type="term" value="F:(S)-2-(5-amino-1-(5-phospho-D-ribosyl)imidazole-4-carboxamido) succinate lyase (fumarate-forming) activity"/>
    <property type="evidence" value="ECO:0007669"/>
    <property type="project" value="RHEA"/>
</dbReference>
<dbReference type="GO" id="GO:0004018">
    <property type="term" value="F:N6-(1,2-dicarboxyethyl)AMP AMP-lyase (fumarate-forming) activity"/>
    <property type="evidence" value="ECO:0007669"/>
    <property type="project" value="InterPro"/>
</dbReference>
<dbReference type="GO" id="GO:0044208">
    <property type="term" value="P:'de novo' AMP biosynthetic process"/>
    <property type="evidence" value="ECO:0007669"/>
    <property type="project" value="UniProtKB-UniPathway"/>
</dbReference>
<dbReference type="GO" id="GO:0006189">
    <property type="term" value="P:'de novo' IMP biosynthetic process"/>
    <property type="evidence" value="ECO:0007669"/>
    <property type="project" value="UniProtKB-UniPathway"/>
</dbReference>
<dbReference type="CDD" id="cd01360">
    <property type="entry name" value="Adenylsuccinate_lyase_1"/>
    <property type="match status" value="1"/>
</dbReference>
<dbReference type="FunFam" id="1.10.275.10:FF:000006">
    <property type="entry name" value="Adenylosuccinate lyase"/>
    <property type="match status" value="1"/>
</dbReference>
<dbReference type="FunFam" id="1.10.40.30:FF:000007">
    <property type="entry name" value="Adenylosuccinate lyase"/>
    <property type="match status" value="1"/>
</dbReference>
<dbReference type="FunFam" id="1.20.200.10:FF:000008">
    <property type="entry name" value="Adenylosuccinate lyase"/>
    <property type="match status" value="1"/>
</dbReference>
<dbReference type="Gene3D" id="1.10.40.30">
    <property type="entry name" value="Fumarase/aspartase (C-terminal domain)"/>
    <property type="match status" value="1"/>
</dbReference>
<dbReference type="Gene3D" id="1.20.200.10">
    <property type="entry name" value="Fumarase/aspartase (Central domain)"/>
    <property type="match status" value="1"/>
</dbReference>
<dbReference type="Gene3D" id="1.10.275.10">
    <property type="entry name" value="Fumarase/aspartase (N-terminal domain)"/>
    <property type="match status" value="1"/>
</dbReference>
<dbReference type="InterPro" id="IPR019468">
    <property type="entry name" value="AdenyloSucc_lyase_C"/>
</dbReference>
<dbReference type="InterPro" id="IPR024083">
    <property type="entry name" value="Fumarase/histidase_N"/>
</dbReference>
<dbReference type="InterPro" id="IPR020557">
    <property type="entry name" value="Fumarate_lyase_CS"/>
</dbReference>
<dbReference type="InterPro" id="IPR000362">
    <property type="entry name" value="Fumarate_lyase_fam"/>
</dbReference>
<dbReference type="InterPro" id="IPR022761">
    <property type="entry name" value="Fumarate_lyase_N"/>
</dbReference>
<dbReference type="InterPro" id="IPR008948">
    <property type="entry name" value="L-Aspartase-like"/>
</dbReference>
<dbReference type="InterPro" id="IPR004769">
    <property type="entry name" value="Pur_lyase"/>
</dbReference>
<dbReference type="NCBIfam" id="TIGR00928">
    <property type="entry name" value="purB"/>
    <property type="match status" value="1"/>
</dbReference>
<dbReference type="PANTHER" id="PTHR43172">
    <property type="entry name" value="ADENYLOSUCCINATE LYASE"/>
    <property type="match status" value="1"/>
</dbReference>
<dbReference type="PANTHER" id="PTHR43172:SF1">
    <property type="entry name" value="ADENYLOSUCCINATE LYASE"/>
    <property type="match status" value="1"/>
</dbReference>
<dbReference type="Pfam" id="PF10397">
    <property type="entry name" value="ADSL_C"/>
    <property type="match status" value="1"/>
</dbReference>
<dbReference type="Pfam" id="PF00206">
    <property type="entry name" value="Lyase_1"/>
    <property type="match status" value="1"/>
</dbReference>
<dbReference type="PRINTS" id="PR00145">
    <property type="entry name" value="ARGSUCLYASE"/>
</dbReference>
<dbReference type="PRINTS" id="PR00149">
    <property type="entry name" value="FUMRATELYASE"/>
</dbReference>
<dbReference type="SMART" id="SM00998">
    <property type="entry name" value="ADSL_C"/>
    <property type="match status" value="1"/>
</dbReference>
<dbReference type="SUPFAM" id="SSF48557">
    <property type="entry name" value="L-aspartase-like"/>
    <property type="match status" value="1"/>
</dbReference>
<dbReference type="PROSITE" id="PS00163">
    <property type="entry name" value="FUMARATE_LYASES"/>
    <property type="match status" value="1"/>
</dbReference>
<evidence type="ECO:0000250" key="1"/>
<evidence type="ECO:0000250" key="2">
    <source>
        <dbReference type="UniProtKB" id="P0AB89"/>
    </source>
</evidence>
<evidence type="ECO:0000305" key="3"/>
<gene>
    <name type="primary">purB</name>
    <name type="ordered locus">sll0421</name>
</gene>
<reference key="1">
    <citation type="journal article" date="1996" name="DNA Res.">
        <title>Sequence analysis of the genome of the unicellular cyanobacterium Synechocystis sp. strain PCC6803. II. Sequence determination of the entire genome and assignment of potential protein-coding regions.</title>
        <authorList>
            <person name="Kaneko T."/>
            <person name="Sato S."/>
            <person name="Kotani H."/>
            <person name="Tanaka A."/>
            <person name="Asamizu E."/>
            <person name="Nakamura Y."/>
            <person name="Miyajima N."/>
            <person name="Hirosawa M."/>
            <person name="Sugiura M."/>
            <person name="Sasamoto S."/>
            <person name="Kimura T."/>
            <person name="Hosouchi T."/>
            <person name="Matsuno A."/>
            <person name="Muraki A."/>
            <person name="Nakazaki N."/>
            <person name="Naruo K."/>
            <person name="Okumura S."/>
            <person name="Shimpo S."/>
            <person name="Takeuchi C."/>
            <person name="Wada T."/>
            <person name="Watanabe A."/>
            <person name="Yamada M."/>
            <person name="Yasuda M."/>
            <person name="Tabata S."/>
        </authorList>
    </citation>
    <scope>NUCLEOTIDE SEQUENCE [LARGE SCALE GENOMIC DNA]</scope>
    <source>
        <strain>ATCC 27184 / PCC 6803 / Kazusa</strain>
    </source>
</reference>
<accession>P74384</accession>
<proteinExistence type="inferred from homology"/>
<feature type="chain" id="PRO_0000137885" description="Adenylosuccinate lyase">
    <location>
        <begin position="1"/>
        <end position="431"/>
    </location>
</feature>
<feature type="active site" description="Proton donor/acceptor" evidence="2">
    <location>
        <position position="141"/>
    </location>
</feature>
<feature type="active site" description="Proton donor/acceptor" evidence="2">
    <location>
        <position position="262"/>
    </location>
</feature>
<feature type="binding site" evidence="2">
    <location>
        <begin position="4"/>
        <end position="5"/>
    </location>
    <ligand>
        <name>N(6)-(1,2-dicarboxyethyl)-AMP</name>
        <dbReference type="ChEBI" id="CHEBI:57567"/>
    </ligand>
</feature>
<feature type="binding site" evidence="2">
    <location>
        <begin position="67"/>
        <end position="69"/>
    </location>
    <ligand>
        <name>N(6)-(1,2-dicarboxyethyl)-AMP</name>
        <dbReference type="ChEBI" id="CHEBI:57567"/>
    </ligand>
</feature>
<feature type="binding site" evidence="2">
    <location>
        <begin position="93"/>
        <end position="94"/>
    </location>
    <ligand>
        <name>N(6)-(1,2-dicarboxyethyl)-AMP</name>
        <dbReference type="ChEBI" id="CHEBI:57567"/>
    </ligand>
</feature>
<feature type="binding site" evidence="2">
    <location>
        <position position="212"/>
    </location>
    <ligand>
        <name>N(6)-(1,2-dicarboxyethyl)-AMP</name>
        <dbReference type="ChEBI" id="CHEBI:57567"/>
    </ligand>
</feature>
<feature type="binding site" evidence="2">
    <location>
        <position position="263"/>
    </location>
    <ligand>
        <name>N(6)-(1,2-dicarboxyethyl)-AMP</name>
        <dbReference type="ChEBI" id="CHEBI:57567"/>
    </ligand>
</feature>
<feature type="binding site" evidence="2">
    <location>
        <begin position="268"/>
        <end position="270"/>
    </location>
    <ligand>
        <name>N(6)-(1,2-dicarboxyethyl)-AMP</name>
        <dbReference type="ChEBI" id="CHEBI:57567"/>
    </ligand>
</feature>
<feature type="binding site" evidence="2">
    <location>
        <begin position="307"/>
        <end position="311"/>
    </location>
    <ligand>
        <name>N(6)-(1,2-dicarboxyethyl)-AMP</name>
        <dbReference type="ChEBI" id="CHEBI:57567"/>
    </ligand>
</feature>
<comment type="function">
    <text evidence="2">Catalyzes two reactions in de novo purine nucleotide biosynthesis. Catalyzes the breakdown of 5-aminoimidazole- (N-succinylocarboxamide) ribotide (SAICAR or 2-[5-amino-1-(5-phospho-beta-D-ribosyl)imidazole-4-carboxamido]succinate) to 5-aminoimidazole-4-carboxamide ribotide (AICAR or 5-amino-1-(5-phospho-beta-D-ribosyl)imidazole-4-carboxamide) and fumarate, and of adenylosuccinate (ADS or N(6)-(1,2-dicarboxyethyl)-AMP) to adenosine monophosphate (AMP) and fumarate.</text>
</comment>
<comment type="catalytic activity">
    <reaction evidence="2">
        <text>N(6)-(1,2-dicarboxyethyl)-AMP = fumarate + AMP</text>
        <dbReference type="Rhea" id="RHEA:16853"/>
        <dbReference type="ChEBI" id="CHEBI:29806"/>
        <dbReference type="ChEBI" id="CHEBI:57567"/>
        <dbReference type="ChEBI" id="CHEBI:456215"/>
        <dbReference type="EC" id="4.3.2.2"/>
    </reaction>
    <physiologicalReaction direction="left-to-right" evidence="2">
        <dbReference type="Rhea" id="RHEA:16854"/>
    </physiologicalReaction>
</comment>
<comment type="catalytic activity">
    <reaction evidence="2">
        <text>(2S)-2-[5-amino-1-(5-phospho-beta-D-ribosyl)imidazole-4-carboxamido]succinate = 5-amino-1-(5-phospho-beta-D-ribosyl)imidazole-4-carboxamide + fumarate</text>
        <dbReference type="Rhea" id="RHEA:23920"/>
        <dbReference type="ChEBI" id="CHEBI:29806"/>
        <dbReference type="ChEBI" id="CHEBI:58443"/>
        <dbReference type="ChEBI" id="CHEBI:58475"/>
        <dbReference type="EC" id="4.3.2.2"/>
    </reaction>
    <physiologicalReaction direction="left-to-right" evidence="2">
        <dbReference type="Rhea" id="RHEA:23921"/>
    </physiologicalReaction>
</comment>
<comment type="pathway">
    <text>Purine metabolism; AMP biosynthesis via de novo pathway; AMP from IMP: step 2/2.</text>
</comment>
<comment type="pathway">
    <text>Purine metabolism; IMP biosynthesis via de novo pathway; 5-amino-1-(5-phospho-D-ribosyl)imidazole-4-carboxamide from 5-amino-1-(5-phospho-D-ribosyl)imidazole-4-carboxylate: step 2/2.</text>
</comment>
<comment type="subunit">
    <text evidence="1">Homooligomer. Residues from neighboring subunits contribute catalytic and substrate-binding residues to each active site (By similarity).</text>
</comment>
<comment type="similarity">
    <text evidence="3">Belongs to the lyase 1 family. Adenylosuccinate lyase subfamily.</text>
</comment>
<protein>
    <recommendedName>
        <fullName>Adenylosuccinate lyase</fullName>
        <shortName>ASL</shortName>
        <ecNumber evidence="2">4.3.2.2</ecNumber>
    </recommendedName>
    <alternativeName>
        <fullName>Adenylosuccinase</fullName>
        <shortName>ASase</shortName>
    </alternativeName>
</protein>
<keyword id="KW-0456">Lyase</keyword>
<keyword id="KW-0658">Purine biosynthesis</keyword>
<keyword id="KW-1185">Reference proteome</keyword>